<dbReference type="EC" id="2.7.1.50" evidence="1"/>
<dbReference type="EMBL" id="BX950851">
    <property type="protein sequence ID" value="CAG76095.1"/>
    <property type="molecule type" value="Genomic_DNA"/>
</dbReference>
<dbReference type="RefSeq" id="WP_011094718.1">
    <property type="nucleotide sequence ID" value="NC_004547.2"/>
</dbReference>
<dbReference type="SMR" id="Q6D299"/>
<dbReference type="STRING" id="218491.ECA3197"/>
<dbReference type="KEGG" id="eca:ECA3197"/>
<dbReference type="PATRIC" id="fig|218491.5.peg.3239"/>
<dbReference type="eggNOG" id="COG2145">
    <property type="taxonomic scope" value="Bacteria"/>
</dbReference>
<dbReference type="HOGENOM" id="CLU_019943_0_1_6"/>
<dbReference type="OrthoDB" id="8909021at2"/>
<dbReference type="UniPathway" id="UPA00060">
    <property type="reaction ID" value="UER00139"/>
</dbReference>
<dbReference type="Proteomes" id="UP000007966">
    <property type="component" value="Chromosome"/>
</dbReference>
<dbReference type="GO" id="GO:0005524">
    <property type="term" value="F:ATP binding"/>
    <property type="evidence" value="ECO:0007669"/>
    <property type="project" value="UniProtKB-UniRule"/>
</dbReference>
<dbReference type="GO" id="GO:0004417">
    <property type="term" value="F:hydroxyethylthiazole kinase activity"/>
    <property type="evidence" value="ECO:0007669"/>
    <property type="project" value="UniProtKB-UniRule"/>
</dbReference>
<dbReference type="GO" id="GO:0000287">
    <property type="term" value="F:magnesium ion binding"/>
    <property type="evidence" value="ECO:0007669"/>
    <property type="project" value="UniProtKB-UniRule"/>
</dbReference>
<dbReference type="GO" id="GO:0009228">
    <property type="term" value="P:thiamine biosynthetic process"/>
    <property type="evidence" value="ECO:0007669"/>
    <property type="project" value="UniProtKB-KW"/>
</dbReference>
<dbReference type="GO" id="GO:0009229">
    <property type="term" value="P:thiamine diphosphate biosynthetic process"/>
    <property type="evidence" value="ECO:0007669"/>
    <property type="project" value="UniProtKB-UniRule"/>
</dbReference>
<dbReference type="CDD" id="cd01170">
    <property type="entry name" value="THZ_kinase"/>
    <property type="match status" value="1"/>
</dbReference>
<dbReference type="FunFam" id="3.40.1190.20:FF:000015">
    <property type="entry name" value="Hydroxyethylthiazole kinase"/>
    <property type="match status" value="1"/>
</dbReference>
<dbReference type="Gene3D" id="3.40.1190.20">
    <property type="match status" value="1"/>
</dbReference>
<dbReference type="HAMAP" id="MF_00228">
    <property type="entry name" value="Thz_kinase"/>
    <property type="match status" value="1"/>
</dbReference>
<dbReference type="InterPro" id="IPR000417">
    <property type="entry name" value="Hyethyz_kinase"/>
</dbReference>
<dbReference type="InterPro" id="IPR029056">
    <property type="entry name" value="Ribokinase-like"/>
</dbReference>
<dbReference type="NCBIfam" id="NF006830">
    <property type="entry name" value="PRK09355.1"/>
    <property type="match status" value="1"/>
</dbReference>
<dbReference type="NCBIfam" id="TIGR00694">
    <property type="entry name" value="thiM"/>
    <property type="match status" value="1"/>
</dbReference>
<dbReference type="Pfam" id="PF02110">
    <property type="entry name" value="HK"/>
    <property type="match status" value="1"/>
</dbReference>
<dbReference type="PIRSF" id="PIRSF000513">
    <property type="entry name" value="Thz_kinase"/>
    <property type="match status" value="1"/>
</dbReference>
<dbReference type="PRINTS" id="PR01099">
    <property type="entry name" value="HYETHTZKNASE"/>
</dbReference>
<dbReference type="SUPFAM" id="SSF53613">
    <property type="entry name" value="Ribokinase-like"/>
    <property type="match status" value="1"/>
</dbReference>
<reference key="1">
    <citation type="journal article" date="2004" name="Proc. Natl. Acad. Sci. U.S.A.">
        <title>Genome sequence of the enterobacterial phytopathogen Erwinia carotovora subsp. atroseptica and characterization of virulence factors.</title>
        <authorList>
            <person name="Bell K.S."/>
            <person name="Sebaihia M."/>
            <person name="Pritchard L."/>
            <person name="Holden M.T.G."/>
            <person name="Hyman L.J."/>
            <person name="Holeva M.C."/>
            <person name="Thomson N.R."/>
            <person name="Bentley S.D."/>
            <person name="Churcher L.J.C."/>
            <person name="Mungall K."/>
            <person name="Atkin R."/>
            <person name="Bason N."/>
            <person name="Brooks K."/>
            <person name="Chillingworth T."/>
            <person name="Clark K."/>
            <person name="Doggett J."/>
            <person name="Fraser A."/>
            <person name="Hance Z."/>
            <person name="Hauser H."/>
            <person name="Jagels K."/>
            <person name="Moule S."/>
            <person name="Norbertczak H."/>
            <person name="Ormond D."/>
            <person name="Price C."/>
            <person name="Quail M.A."/>
            <person name="Sanders M."/>
            <person name="Walker D."/>
            <person name="Whitehead S."/>
            <person name="Salmond G.P.C."/>
            <person name="Birch P.R.J."/>
            <person name="Parkhill J."/>
            <person name="Toth I.K."/>
        </authorList>
    </citation>
    <scope>NUCLEOTIDE SEQUENCE [LARGE SCALE GENOMIC DNA]</scope>
    <source>
        <strain>SCRI 1043 / ATCC BAA-672</strain>
    </source>
</reference>
<name>THIM_PECAS</name>
<evidence type="ECO:0000255" key="1">
    <source>
        <dbReference type="HAMAP-Rule" id="MF_00228"/>
    </source>
</evidence>
<gene>
    <name evidence="1" type="primary">thiM</name>
    <name type="ordered locus">ECA3197</name>
</gene>
<protein>
    <recommendedName>
        <fullName evidence="1">Hydroxyethylthiazole kinase</fullName>
        <ecNumber evidence="1">2.7.1.50</ecNumber>
    </recommendedName>
    <alternativeName>
        <fullName evidence="1">4-methyl-5-beta-hydroxyethylthiazole kinase</fullName>
        <shortName evidence="1">TH kinase</shortName>
        <shortName evidence="1">Thz kinase</shortName>
    </alternativeName>
</protein>
<proteinExistence type="inferred from homology"/>
<sequence length="264" mass="27341">MNTQPADFSAAQAATSLTQFRSAAPLVHCLTNDVVQSFTANVLLALNASPAMVVDPEEAAQFSAVADALLINVGTLERTRAEAMRAAVNSAHQAGTPWVLDPVAVGGLTFRTEFCRELLTWKPAAIRGNASEIMALAGLAAQGRGVDSADDSLAALPAARELARQVGTIVVVTGAVDYVTDGERDIAVTGGDSMMTRVVGTGCALSAVVAGFCSLEGDRLSHVTAACYVMALAGQQATSVSQGTGSFIPHFLDRLYTLRAEDLA</sequence>
<organism>
    <name type="scientific">Pectobacterium atrosepticum (strain SCRI 1043 / ATCC BAA-672)</name>
    <name type="common">Erwinia carotovora subsp. atroseptica</name>
    <dbReference type="NCBI Taxonomy" id="218491"/>
    <lineage>
        <taxon>Bacteria</taxon>
        <taxon>Pseudomonadati</taxon>
        <taxon>Pseudomonadota</taxon>
        <taxon>Gammaproteobacteria</taxon>
        <taxon>Enterobacterales</taxon>
        <taxon>Pectobacteriaceae</taxon>
        <taxon>Pectobacterium</taxon>
    </lineage>
</organism>
<comment type="function">
    <text evidence="1">Catalyzes the phosphorylation of the hydroxyl group of 4-methyl-5-beta-hydroxyethylthiazole (THZ).</text>
</comment>
<comment type="catalytic activity">
    <reaction evidence="1">
        <text>5-(2-hydroxyethyl)-4-methylthiazole + ATP = 4-methyl-5-(2-phosphooxyethyl)-thiazole + ADP + H(+)</text>
        <dbReference type="Rhea" id="RHEA:24212"/>
        <dbReference type="ChEBI" id="CHEBI:15378"/>
        <dbReference type="ChEBI" id="CHEBI:17957"/>
        <dbReference type="ChEBI" id="CHEBI:30616"/>
        <dbReference type="ChEBI" id="CHEBI:58296"/>
        <dbReference type="ChEBI" id="CHEBI:456216"/>
        <dbReference type="EC" id="2.7.1.50"/>
    </reaction>
</comment>
<comment type="cofactor">
    <cofactor evidence="1">
        <name>Mg(2+)</name>
        <dbReference type="ChEBI" id="CHEBI:18420"/>
    </cofactor>
</comment>
<comment type="pathway">
    <text evidence="1">Cofactor biosynthesis; thiamine diphosphate biosynthesis; 4-methyl-5-(2-phosphoethyl)-thiazole from 5-(2-hydroxyethyl)-4-methylthiazole: step 1/1.</text>
</comment>
<comment type="similarity">
    <text evidence="1">Belongs to the Thz kinase family.</text>
</comment>
<feature type="chain" id="PRO_0000336555" description="Hydroxyethylthiazole kinase">
    <location>
        <begin position="1"/>
        <end position="264"/>
    </location>
</feature>
<feature type="binding site" evidence="1">
    <location>
        <position position="52"/>
    </location>
    <ligand>
        <name>substrate</name>
    </ligand>
</feature>
<feature type="binding site" evidence="1">
    <location>
        <position position="127"/>
    </location>
    <ligand>
        <name>ATP</name>
        <dbReference type="ChEBI" id="CHEBI:30616"/>
    </ligand>
</feature>
<feature type="binding site" evidence="1">
    <location>
        <position position="173"/>
    </location>
    <ligand>
        <name>ATP</name>
        <dbReference type="ChEBI" id="CHEBI:30616"/>
    </ligand>
</feature>
<feature type="binding site" evidence="1">
    <location>
        <position position="200"/>
    </location>
    <ligand>
        <name>substrate</name>
    </ligand>
</feature>
<keyword id="KW-0067">ATP-binding</keyword>
<keyword id="KW-0418">Kinase</keyword>
<keyword id="KW-0460">Magnesium</keyword>
<keyword id="KW-0479">Metal-binding</keyword>
<keyword id="KW-0547">Nucleotide-binding</keyword>
<keyword id="KW-1185">Reference proteome</keyword>
<keyword id="KW-0784">Thiamine biosynthesis</keyword>
<keyword id="KW-0808">Transferase</keyword>
<accession>Q6D299</accession>